<feature type="signal peptide" evidence="1">
    <location>
        <begin position="1"/>
        <end position="16"/>
    </location>
</feature>
<feature type="chain" id="PRO_1000136557" description="UPF0257 lipoprotein YnfC">
    <location>
        <begin position="17"/>
        <end position="236"/>
    </location>
</feature>
<feature type="lipid moiety-binding region" description="N-palmitoyl cysteine" evidence="1">
    <location>
        <position position="17"/>
    </location>
</feature>
<feature type="lipid moiety-binding region" description="S-diacylglycerol cysteine" evidence="1">
    <location>
        <position position="17"/>
    </location>
</feature>
<comment type="subcellular location">
    <subcellularLocation>
        <location evidence="1">Cell membrane</location>
        <topology evidence="1">Lipid-anchor</topology>
    </subcellularLocation>
</comment>
<comment type="similarity">
    <text evidence="1">Belongs to the UPF0257 family.</text>
</comment>
<dbReference type="EMBL" id="CP001138">
    <property type="protein sequence ID" value="ACH51889.1"/>
    <property type="molecule type" value="Genomic_DNA"/>
</dbReference>
<dbReference type="RefSeq" id="WP_000743122.1">
    <property type="nucleotide sequence ID" value="NC_011149.1"/>
</dbReference>
<dbReference type="SMR" id="B5F6E4"/>
<dbReference type="KEGG" id="sea:SeAg_B1671"/>
<dbReference type="HOGENOM" id="CLU_1174761_0_0_6"/>
<dbReference type="Proteomes" id="UP000008819">
    <property type="component" value="Chromosome"/>
</dbReference>
<dbReference type="GO" id="GO:0005886">
    <property type="term" value="C:plasma membrane"/>
    <property type="evidence" value="ECO:0007669"/>
    <property type="project" value="UniProtKB-SubCell"/>
</dbReference>
<dbReference type="HAMAP" id="MF_01065">
    <property type="entry name" value="UPF0257"/>
    <property type="match status" value="1"/>
</dbReference>
<dbReference type="InterPro" id="IPR010646">
    <property type="entry name" value="UPF0257"/>
</dbReference>
<dbReference type="NCBIfam" id="NF002798">
    <property type="entry name" value="PRK02939.1"/>
    <property type="match status" value="1"/>
</dbReference>
<dbReference type="Pfam" id="PF06788">
    <property type="entry name" value="UPF0257"/>
    <property type="match status" value="1"/>
</dbReference>
<dbReference type="PROSITE" id="PS51257">
    <property type="entry name" value="PROKAR_LIPOPROTEIN"/>
    <property type="match status" value="1"/>
</dbReference>
<accession>B5F6E4</accession>
<sequence length="236" mass="26202">MKKPLLLTLLCMILAGCDNPKSLESFTPEMASFSNEFDFDPLRGPVKDFSQTLMSENGEVAKQVTGTLSQEGCFDTLELHDLENNTGLALVLDANYYRDAQTLEKKVQLQGKCQLAALPSAGVTWETDDNGFVVSATGKEMKVEYRYDSEGYPLGKTTINSQNTLSVTAKPSADPRKKLDYTAVSRVDDRQVGNVTQSCEYDAYANPVDCRLVIVDESVKPAVSHHYTIKNRIDYY</sequence>
<name>YNFC_SALA4</name>
<protein>
    <recommendedName>
        <fullName evidence="1">UPF0257 lipoprotein YnfC</fullName>
    </recommendedName>
</protein>
<proteinExistence type="inferred from homology"/>
<keyword id="KW-1003">Cell membrane</keyword>
<keyword id="KW-0449">Lipoprotein</keyword>
<keyword id="KW-0472">Membrane</keyword>
<keyword id="KW-0564">Palmitate</keyword>
<keyword id="KW-0732">Signal</keyword>
<reference key="1">
    <citation type="journal article" date="2011" name="J. Bacteriol.">
        <title>Comparative genomics of 28 Salmonella enterica isolates: evidence for CRISPR-mediated adaptive sublineage evolution.</title>
        <authorList>
            <person name="Fricke W.F."/>
            <person name="Mammel M.K."/>
            <person name="McDermott P.F."/>
            <person name="Tartera C."/>
            <person name="White D.G."/>
            <person name="Leclerc J.E."/>
            <person name="Ravel J."/>
            <person name="Cebula T.A."/>
        </authorList>
    </citation>
    <scope>NUCLEOTIDE SEQUENCE [LARGE SCALE GENOMIC DNA]</scope>
    <source>
        <strain>SL483</strain>
    </source>
</reference>
<gene>
    <name evidence="1" type="primary">ynfC</name>
    <name type="ordered locus">SeAg_B1671</name>
</gene>
<organism>
    <name type="scientific">Salmonella agona (strain SL483)</name>
    <dbReference type="NCBI Taxonomy" id="454166"/>
    <lineage>
        <taxon>Bacteria</taxon>
        <taxon>Pseudomonadati</taxon>
        <taxon>Pseudomonadota</taxon>
        <taxon>Gammaproteobacteria</taxon>
        <taxon>Enterobacterales</taxon>
        <taxon>Enterobacteriaceae</taxon>
        <taxon>Salmonella</taxon>
    </lineage>
</organism>
<evidence type="ECO:0000255" key="1">
    <source>
        <dbReference type="HAMAP-Rule" id="MF_01065"/>
    </source>
</evidence>